<protein>
    <recommendedName>
        <fullName evidence="1">Large ribosomal subunit protein uL13</fullName>
    </recommendedName>
    <alternativeName>
        <fullName evidence="2">50S ribosomal protein L13</fullName>
    </alternativeName>
</protein>
<accession>A8GXN7</accession>
<evidence type="ECO:0000255" key="1">
    <source>
        <dbReference type="HAMAP-Rule" id="MF_01366"/>
    </source>
</evidence>
<evidence type="ECO:0000305" key="2"/>
<organism>
    <name type="scientific">Rickettsia bellii (strain OSU 85-389)</name>
    <dbReference type="NCBI Taxonomy" id="391896"/>
    <lineage>
        <taxon>Bacteria</taxon>
        <taxon>Pseudomonadati</taxon>
        <taxon>Pseudomonadota</taxon>
        <taxon>Alphaproteobacteria</taxon>
        <taxon>Rickettsiales</taxon>
        <taxon>Rickettsiaceae</taxon>
        <taxon>Rickettsieae</taxon>
        <taxon>Rickettsia</taxon>
        <taxon>belli group</taxon>
    </lineage>
</organism>
<dbReference type="EMBL" id="CP000849">
    <property type="protein sequence ID" value="ABV79637.1"/>
    <property type="molecule type" value="Genomic_DNA"/>
</dbReference>
<dbReference type="RefSeq" id="WP_011476918.1">
    <property type="nucleotide sequence ID" value="NC_009883.1"/>
</dbReference>
<dbReference type="SMR" id="A8GXN7"/>
<dbReference type="KEGG" id="rbo:A1I_06605"/>
<dbReference type="HOGENOM" id="CLU_082184_2_0_5"/>
<dbReference type="GO" id="GO:0022625">
    <property type="term" value="C:cytosolic large ribosomal subunit"/>
    <property type="evidence" value="ECO:0007669"/>
    <property type="project" value="TreeGrafter"/>
</dbReference>
<dbReference type="GO" id="GO:0003729">
    <property type="term" value="F:mRNA binding"/>
    <property type="evidence" value="ECO:0007669"/>
    <property type="project" value="TreeGrafter"/>
</dbReference>
<dbReference type="GO" id="GO:0003735">
    <property type="term" value="F:structural constituent of ribosome"/>
    <property type="evidence" value="ECO:0007669"/>
    <property type="project" value="InterPro"/>
</dbReference>
<dbReference type="GO" id="GO:0017148">
    <property type="term" value="P:negative regulation of translation"/>
    <property type="evidence" value="ECO:0007669"/>
    <property type="project" value="TreeGrafter"/>
</dbReference>
<dbReference type="GO" id="GO:0006412">
    <property type="term" value="P:translation"/>
    <property type="evidence" value="ECO:0007669"/>
    <property type="project" value="UniProtKB-UniRule"/>
</dbReference>
<dbReference type="CDD" id="cd00392">
    <property type="entry name" value="Ribosomal_L13"/>
    <property type="match status" value="1"/>
</dbReference>
<dbReference type="Gene3D" id="3.90.1180.10">
    <property type="entry name" value="Ribosomal protein L13"/>
    <property type="match status" value="1"/>
</dbReference>
<dbReference type="HAMAP" id="MF_01366">
    <property type="entry name" value="Ribosomal_uL13"/>
    <property type="match status" value="1"/>
</dbReference>
<dbReference type="InterPro" id="IPR005822">
    <property type="entry name" value="Ribosomal_uL13"/>
</dbReference>
<dbReference type="InterPro" id="IPR005823">
    <property type="entry name" value="Ribosomal_uL13_bac-type"/>
</dbReference>
<dbReference type="InterPro" id="IPR023563">
    <property type="entry name" value="Ribosomal_uL13_CS"/>
</dbReference>
<dbReference type="InterPro" id="IPR036899">
    <property type="entry name" value="Ribosomal_uL13_sf"/>
</dbReference>
<dbReference type="NCBIfam" id="TIGR01066">
    <property type="entry name" value="rplM_bact"/>
    <property type="match status" value="1"/>
</dbReference>
<dbReference type="PANTHER" id="PTHR11545:SF2">
    <property type="entry name" value="LARGE RIBOSOMAL SUBUNIT PROTEIN UL13M"/>
    <property type="match status" value="1"/>
</dbReference>
<dbReference type="PANTHER" id="PTHR11545">
    <property type="entry name" value="RIBOSOMAL PROTEIN L13"/>
    <property type="match status" value="1"/>
</dbReference>
<dbReference type="Pfam" id="PF00572">
    <property type="entry name" value="Ribosomal_L13"/>
    <property type="match status" value="1"/>
</dbReference>
<dbReference type="PIRSF" id="PIRSF002181">
    <property type="entry name" value="Ribosomal_L13"/>
    <property type="match status" value="1"/>
</dbReference>
<dbReference type="SUPFAM" id="SSF52161">
    <property type="entry name" value="Ribosomal protein L13"/>
    <property type="match status" value="1"/>
</dbReference>
<dbReference type="PROSITE" id="PS00783">
    <property type="entry name" value="RIBOSOMAL_L13"/>
    <property type="match status" value="1"/>
</dbReference>
<comment type="function">
    <text evidence="1">This protein is one of the early assembly proteins of the 50S ribosomal subunit, although it is not seen to bind rRNA by itself. It is important during the early stages of 50S assembly.</text>
</comment>
<comment type="subunit">
    <text evidence="1">Part of the 50S ribosomal subunit.</text>
</comment>
<comment type="similarity">
    <text evidence="1">Belongs to the universal ribosomal protein uL13 family.</text>
</comment>
<keyword id="KW-0687">Ribonucleoprotein</keyword>
<keyword id="KW-0689">Ribosomal protein</keyword>
<proteinExistence type="inferred from homology"/>
<feature type="chain" id="PRO_1000055460" description="Large ribosomal subunit protein uL13">
    <location>
        <begin position="1"/>
        <end position="155"/>
    </location>
</feature>
<gene>
    <name evidence="1" type="primary">rplM</name>
    <name type="ordered locus">A1I_06605</name>
</gene>
<reference key="1">
    <citation type="submission" date="2007-09" db="EMBL/GenBank/DDBJ databases">
        <title>Complete genome sequencing of Rickettsia bellii.</title>
        <authorList>
            <person name="Madan A."/>
            <person name="Lee H."/>
            <person name="Madan A."/>
            <person name="Yoon J.-G."/>
            <person name="Ryu G.-Y."/>
            <person name="Dasch G."/>
            <person name="Ereemeva M."/>
        </authorList>
    </citation>
    <scope>NUCLEOTIDE SEQUENCE [LARGE SCALE GENOMIC DNA]</scope>
    <source>
        <strain>OSU 85-389</strain>
    </source>
</reference>
<sequence>MKTYSAKPSEIEKKWWVIDAKNVVLGRLASRVANMLRGKHKPSFTPHMDCGDNIIIINAEHVTLTGKKANPKDGKIYYRHTGFPGGIKDTTAGKILSGKHPERVIKMAVKRMITRNALGAKQMSNLYIYANSEHPHAGQQPVVYDFASQNPKNKK</sequence>
<name>RL13_RICB8</name>